<protein>
    <recommendedName>
        <fullName evidence="2">Asparagine--tRNA ligase</fullName>
        <ecNumber evidence="2">6.1.1.22</ecNumber>
    </recommendedName>
    <alternativeName>
        <fullName evidence="2">Asparaginyl-tRNA synthetase</fullName>
        <shortName evidence="2">AsnRS</shortName>
    </alternativeName>
</protein>
<comment type="catalytic activity">
    <reaction evidence="2">
        <text>tRNA(Asn) + L-asparagine + ATP = L-asparaginyl-tRNA(Asn) + AMP + diphosphate + H(+)</text>
        <dbReference type="Rhea" id="RHEA:11180"/>
        <dbReference type="Rhea" id="RHEA-COMP:9659"/>
        <dbReference type="Rhea" id="RHEA-COMP:9674"/>
        <dbReference type="ChEBI" id="CHEBI:15378"/>
        <dbReference type="ChEBI" id="CHEBI:30616"/>
        <dbReference type="ChEBI" id="CHEBI:33019"/>
        <dbReference type="ChEBI" id="CHEBI:58048"/>
        <dbReference type="ChEBI" id="CHEBI:78442"/>
        <dbReference type="ChEBI" id="CHEBI:78515"/>
        <dbReference type="ChEBI" id="CHEBI:456215"/>
        <dbReference type="EC" id="6.1.1.22"/>
    </reaction>
</comment>
<comment type="subunit">
    <text evidence="2">Homodimer.</text>
</comment>
<comment type="subcellular location">
    <subcellularLocation>
        <location evidence="2">Cytoplasm</location>
    </subcellularLocation>
</comment>
<comment type="similarity">
    <text evidence="2">Belongs to the class-II aminoacyl-tRNA synthetase family.</text>
</comment>
<name>SYN_SHIFL</name>
<accession>P0A8M2</accession>
<accession>P17242</accession>
<proteinExistence type="inferred from homology"/>
<organism>
    <name type="scientific">Shigella flexneri</name>
    <dbReference type="NCBI Taxonomy" id="623"/>
    <lineage>
        <taxon>Bacteria</taxon>
        <taxon>Pseudomonadati</taxon>
        <taxon>Pseudomonadota</taxon>
        <taxon>Gammaproteobacteria</taxon>
        <taxon>Enterobacterales</taxon>
        <taxon>Enterobacteriaceae</taxon>
        <taxon>Shigella</taxon>
    </lineage>
</organism>
<gene>
    <name evidence="2" type="primary">asnS</name>
    <name type="ordered locus">SF0927</name>
    <name type="ordered locus">S0991</name>
</gene>
<sequence length="466" mass="52570">MSVVPVADVLQGRVAVDSEVTVRGWVRTRRDSKAGISFLAVYDGSCFDPVQAVINNSLPNYNEDVLRLTTGCSVIVTGKVVASPGQGQQFEIQASKVEVAGWVEDPDTYPMAAKRHSIEYLREVAHLRPRTNLIGAVARVRHTLAQALHRFFNEQGFFWVSTPLITASDTEGAGEMFRVSTLDLENLPRNDQGKVDFDKDFFGKESFLTVSGQLNGETYACALSKIYTFGPTFRAENSNTSRHLAEFWMLEPEVAFANLNDIAGLAEAMLKYVFKAVLEERADDMKFFAERVDKDAVSRLERFIEADFAQVDYTDAVTILENCGRKFENPVYWGVDLSSEHERYLAEEHFKAPVVVKNYPKDIKAFYMRLNEDGKTVAAMDVLAPGIGEIIGGSQREERLDVLDERMLEMGLNKEDYWWYRDLRRYGTVPHSGFGLGFERLIAYVTGVQNVRDVIPFPRTPRNASF</sequence>
<evidence type="ECO:0000250" key="1"/>
<evidence type="ECO:0000255" key="2">
    <source>
        <dbReference type="HAMAP-Rule" id="MF_00534"/>
    </source>
</evidence>
<feature type="initiator methionine" description="Removed" evidence="1">
    <location>
        <position position="1"/>
    </location>
</feature>
<feature type="chain" id="PRO_0000176446" description="Asparagine--tRNA ligase">
    <location>
        <begin position="2"/>
        <end position="466"/>
    </location>
</feature>
<reference key="1">
    <citation type="journal article" date="2002" name="Nucleic Acids Res.">
        <title>Genome sequence of Shigella flexneri 2a: insights into pathogenicity through comparison with genomes of Escherichia coli K12 and O157.</title>
        <authorList>
            <person name="Jin Q."/>
            <person name="Yuan Z."/>
            <person name="Xu J."/>
            <person name="Wang Y."/>
            <person name="Shen Y."/>
            <person name="Lu W."/>
            <person name="Wang J."/>
            <person name="Liu H."/>
            <person name="Yang J."/>
            <person name="Yang F."/>
            <person name="Zhang X."/>
            <person name="Zhang J."/>
            <person name="Yang G."/>
            <person name="Wu H."/>
            <person name="Qu D."/>
            <person name="Dong J."/>
            <person name="Sun L."/>
            <person name="Xue Y."/>
            <person name="Zhao A."/>
            <person name="Gao Y."/>
            <person name="Zhu J."/>
            <person name="Kan B."/>
            <person name="Ding K."/>
            <person name="Chen S."/>
            <person name="Cheng H."/>
            <person name="Yao Z."/>
            <person name="He B."/>
            <person name="Chen R."/>
            <person name="Ma D."/>
            <person name="Qiang B."/>
            <person name="Wen Y."/>
            <person name="Hou Y."/>
            <person name="Yu J."/>
        </authorList>
    </citation>
    <scope>NUCLEOTIDE SEQUENCE [LARGE SCALE GENOMIC DNA]</scope>
    <source>
        <strain>301 / Serotype 2a</strain>
    </source>
</reference>
<reference key="2">
    <citation type="journal article" date="2003" name="Infect. Immun.">
        <title>Complete genome sequence and comparative genomics of Shigella flexneri serotype 2a strain 2457T.</title>
        <authorList>
            <person name="Wei J."/>
            <person name="Goldberg M.B."/>
            <person name="Burland V."/>
            <person name="Venkatesan M.M."/>
            <person name="Deng W."/>
            <person name="Fournier G."/>
            <person name="Mayhew G.F."/>
            <person name="Plunkett G. III"/>
            <person name="Rose D.J."/>
            <person name="Darling A."/>
            <person name="Mau B."/>
            <person name="Perna N.T."/>
            <person name="Payne S.M."/>
            <person name="Runyen-Janecky L.J."/>
            <person name="Zhou S."/>
            <person name="Schwartz D.C."/>
            <person name="Blattner F.R."/>
        </authorList>
    </citation>
    <scope>NUCLEOTIDE SEQUENCE [LARGE SCALE GENOMIC DNA]</scope>
    <source>
        <strain>ATCC 700930 / 2457T / Serotype 2a</strain>
    </source>
</reference>
<dbReference type="EC" id="6.1.1.22" evidence="2"/>
<dbReference type="EMBL" id="AE005674">
    <property type="protein sequence ID" value="AAN42556.2"/>
    <property type="molecule type" value="Genomic_DNA"/>
</dbReference>
<dbReference type="EMBL" id="AE014073">
    <property type="protein sequence ID" value="AAP16442.1"/>
    <property type="molecule type" value="Genomic_DNA"/>
</dbReference>
<dbReference type="RefSeq" id="WP_000117881.1">
    <property type="nucleotide sequence ID" value="NZ_WPGW01000157.1"/>
</dbReference>
<dbReference type="SMR" id="P0A8M2"/>
<dbReference type="STRING" id="198214.SF0927"/>
<dbReference type="PaxDb" id="198214-SF0927"/>
<dbReference type="GeneID" id="93776484"/>
<dbReference type="KEGG" id="sfl:SF0927"/>
<dbReference type="KEGG" id="sfx:S0991"/>
<dbReference type="PATRIC" id="fig|198214.7.peg.1079"/>
<dbReference type="HOGENOM" id="CLU_004553_2_0_6"/>
<dbReference type="Proteomes" id="UP000001006">
    <property type="component" value="Chromosome"/>
</dbReference>
<dbReference type="Proteomes" id="UP000002673">
    <property type="component" value="Chromosome"/>
</dbReference>
<dbReference type="GO" id="GO:0005737">
    <property type="term" value="C:cytoplasm"/>
    <property type="evidence" value="ECO:0007669"/>
    <property type="project" value="UniProtKB-SubCell"/>
</dbReference>
<dbReference type="GO" id="GO:0004816">
    <property type="term" value="F:asparagine-tRNA ligase activity"/>
    <property type="evidence" value="ECO:0007669"/>
    <property type="project" value="UniProtKB-UniRule"/>
</dbReference>
<dbReference type="GO" id="GO:0005524">
    <property type="term" value="F:ATP binding"/>
    <property type="evidence" value="ECO:0007669"/>
    <property type="project" value="UniProtKB-UniRule"/>
</dbReference>
<dbReference type="GO" id="GO:0003676">
    <property type="term" value="F:nucleic acid binding"/>
    <property type="evidence" value="ECO:0007669"/>
    <property type="project" value="InterPro"/>
</dbReference>
<dbReference type="GO" id="GO:0006421">
    <property type="term" value="P:asparaginyl-tRNA aminoacylation"/>
    <property type="evidence" value="ECO:0007669"/>
    <property type="project" value="UniProtKB-UniRule"/>
</dbReference>
<dbReference type="CDD" id="cd00776">
    <property type="entry name" value="AsxRS_core"/>
    <property type="match status" value="1"/>
</dbReference>
<dbReference type="CDD" id="cd04318">
    <property type="entry name" value="EcAsnRS_like_N"/>
    <property type="match status" value="1"/>
</dbReference>
<dbReference type="FunFam" id="2.40.50.140:FF:000116">
    <property type="entry name" value="Asparagine--tRNA ligase"/>
    <property type="match status" value="1"/>
</dbReference>
<dbReference type="FunFam" id="3.30.930.10:FF:000016">
    <property type="entry name" value="Asparagine--tRNA ligase"/>
    <property type="match status" value="1"/>
</dbReference>
<dbReference type="Gene3D" id="3.30.930.10">
    <property type="entry name" value="Bira Bifunctional Protein, Domain 2"/>
    <property type="match status" value="1"/>
</dbReference>
<dbReference type="Gene3D" id="2.40.50.140">
    <property type="entry name" value="Nucleic acid-binding proteins"/>
    <property type="match status" value="1"/>
</dbReference>
<dbReference type="HAMAP" id="MF_00534">
    <property type="entry name" value="Asn_tRNA_synth"/>
    <property type="match status" value="1"/>
</dbReference>
<dbReference type="InterPro" id="IPR004364">
    <property type="entry name" value="Aa-tRNA-synt_II"/>
</dbReference>
<dbReference type="InterPro" id="IPR006195">
    <property type="entry name" value="aa-tRNA-synth_II"/>
</dbReference>
<dbReference type="InterPro" id="IPR045864">
    <property type="entry name" value="aa-tRNA-synth_II/BPL/LPL"/>
</dbReference>
<dbReference type="InterPro" id="IPR004522">
    <property type="entry name" value="Asn-tRNA-ligase"/>
</dbReference>
<dbReference type="InterPro" id="IPR002312">
    <property type="entry name" value="Asp/Asn-tRNA-synth_IIb"/>
</dbReference>
<dbReference type="InterPro" id="IPR012340">
    <property type="entry name" value="NA-bd_OB-fold"/>
</dbReference>
<dbReference type="InterPro" id="IPR004365">
    <property type="entry name" value="NA-bd_OB_tRNA"/>
</dbReference>
<dbReference type="NCBIfam" id="TIGR00457">
    <property type="entry name" value="asnS"/>
    <property type="match status" value="1"/>
</dbReference>
<dbReference type="NCBIfam" id="NF003037">
    <property type="entry name" value="PRK03932.1"/>
    <property type="match status" value="1"/>
</dbReference>
<dbReference type="PANTHER" id="PTHR22594:SF34">
    <property type="entry name" value="ASPARAGINE--TRNA LIGASE, MITOCHONDRIAL-RELATED"/>
    <property type="match status" value="1"/>
</dbReference>
<dbReference type="PANTHER" id="PTHR22594">
    <property type="entry name" value="ASPARTYL/LYSYL-TRNA SYNTHETASE"/>
    <property type="match status" value="1"/>
</dbReference>
<dbReference type="Pfam" id="PF00152">
    <property type="entry name" value="tRNA-synt_2"/>
    <property type="match status" value="1"/>
</dbReference>
<dbReference type="Pfam" id="PF01336">
    <property type="entry name" value="tRNA_anti-codon"/>
    <property type="match status" value="1"/>
</dbReference>
<dbReference type="PRINTS" id="PR01042">
    <property type="entry name" value="TRNASYNTHASP"/>
</dbReference>
<dbReference type="SUPFAM" id="SSF55681">
    <property type="entry name" value="Class II aaRS and biotin synthetases"/>
    <property type="match status" value="1"/>
</dbReference>
<dbReference type="SUPFAM" id="SSF50249">
    <property type="entry name" value="Nucleic acid-binding proteins"/>
    <property type="match status" value="1"/>
</dbReference>
<dbReference type="PROSITE" id="PS50862">
    <property type="entry name" value="AA_TRNA_LIGASE_II"/>
    <property type="match status" value="1"/>
</dbReference>
<keyword id="KW-0030">Aminoacyl-tRNA synthetase</keyword>
<keyword id="KW-0067">ATP-binding</keyword>
<keyword id="KW-0963">Cytoplasm</keyword>
<keyword id="KW-0436">Ligase</keyword>
<keyword id="KW-0547">Nucleotide-binding</keyword>
<keyword id="KW-0648">Protein biosynthesis</keyword>
<keyword id="KW-1185">Reference proteome</keyword>